<accession>B8JCU6</accession>
<proteinExistence type="inferred from homology"/>
<reference key="1">
    <citation type="submission" date="2009-01" db="EMBL/GenBank/DDBJ databases">
        <title>Complete sequence of Anaeromyxobacter dehalogenans 2CP-1.</title>
        <authorList>
            <person name="Lucas S."/>
            <person name="Copeland A."/>
            <person name="Lapidus A."/>
            <person name="Glavina del Rio T."/>
            <person name="Dalin E."/>
            <person name="Tice H."/>
            <person name="Bruce D."/>
            <person name="Goodwin L."/>
            <person name="Pitluck S."/>
            <person name="Saunders E."/>
            <person name="Brettin T."/>
            <person name="Detter J.C."/>
            <person name="Han C."/>
            <person name="Larimer F."/>
            <person name="Land M."/>
            <person name="Hauser L."/>
            <person name="Kyrpides N."/>
            <person name="Ovchinnikova G."/>
            <person name="Beliaev A.S."/>
            <person name="Richardson P."/>
        </authorList>
    </citation>
    <scope>NUCLEOTIDE SEQUENCE [LARGE SCALE GENOMIC DNA]</scope>
    <source>
        <strain>2CP-1 / ATCC BAA-258</strain>
    </source>
</reference>
<keyword id="KW-0963">Cytoplasm</keyword>
<keyword id="KW-0413">Isomerase</keyword>
<keyword id="KW-0627">Porphyrin biosynthesis</keyword>
<keyword id="KW-0663">Pyridoxal phosphate</keyword>
<name>GSA_ANAD2</name>
<dbReference type="EC" id="5.4.3.8" evidence="1"/>
<dbReference type="EMBL" id="CP001359">
    <property type="protein sequence ID" value="ACL67816.1"/>
    <property type="molecule type" value="Genomic_DNA"/>
</dbReference>
<dbReference type="RefSeq" id="WP_015935494.1">
    <property type="nucleotide sequence ID" value="NC_011891.1"/>
</dbReference>
<dbReference type="SMR" id="B8JCU6"/>
<dbReference type="KEGG" id="acp:A2cp1_4499"/>
<dbReference type="HOGENOM" id="CLU_016922_1_5_7"/>
<dbReference type="UniPathway" id="UPA00251">
    <property type="reaction ID" value="UER00317"/>
</dbReference>
<dbReference type="Proteomes" id="UP000007089">
    <property type="component" value="Chromosome"/>
</dbReference>
<dbReference type="GO" id="GO:0005737">
    <property type="term" value="C:cytoplasm"/>
    <property type="evidence" value="ECO:0007669"/>
    <property type="project" value="UniProtKB-SubCell"/>
</dbReference>
<dbReference type="GO" id="GO:0042286">
    <property type="term" value="F:glutamate-1-semialdehyde 2,1-aminomutase activity"/>
    <property type="evidence" value="ECO:0007669"/>
    <property type="project" value="UniProtKB-UniRule"/>
</dbReference>
<dbReference type="GO" id="GO:0030170">
    <property type="term" value="F:pyridoxal phosphate binding"/>
    <property type="evidence" value="ECO:0007669"/>
    <property type="project" value="InterPro"/>
</dbReference>
<dbReference type="GO" id="GO:0008483">
    <property type="term" value="F:transaminase activity"/>
    <property type="evidence" value="ECO:0007669"/>
    <property type="project" value="InterPro"/>
</dbReference>
<dbReference type="GO" id="GO:0006782">
    <property type="term" value="P:protoporphyrinogen IX biosynthetic process"/>
    <property type="evidence" value="ECO:0007669"/>
    <property type="project" value="UniProtKB-UniRule"/>
</dbReference>
<dbReference type="CDD" id="cd00610">
    <property type="entry name" value="OAT_like"/>
    <property type="match status" value="1"/>
</dbReference>
<dbReference type="FunFam" id="3.40.640.10:FF:000021">
    <property type="entry name" value="Glutamate-1-semialdehyde 2,1-aminomutase"/>
    <property type="match status" value="1"/>
</dbReference>
<dbReference type="Gene3D" id="3.90.1150.10">
    <property type="entry name" value="Aspartate Aminotransferase, domain 1"/>
    <property type="match status" value="1"/>
</dbReference>
<dbReference type="Gene3D" id="3.40.640.10">
    <property type="entry name" value="Type I PLP-dependent aspartate aminotransferase-like (Major domain)"/>
    <property type="match status" value="1"/>
</dbReference>
<dbReference type="HAMAP" id="MF_00375">
    <property type="entry name" value="HemL_aminotrans_3"/>
    <property type="match status" value="1"/>
</dbReference>
<dbReference type="InterPro" id="IPR004639">
    <property type="entry name" value="4pyrrol_synth_GluAld_NH2Trfase"/>
</dbReference>
<dbReference type="InterPro" id="IPR005814">
    <property type="entry name" value="Aminotrans_3"/>
</dbReference>
<dbReference type="InterPro" id="IPR049704">
    <property type="entry name" value="Aminotrans_3_PPA_site"/>
</dbReference>
<dbReference type="InterPro" id="IPR015424">
    <property type="entry name" value="PyrdxlP-dep_Trfase"/>
</dbReference>
<dbReference type="InterPro" id="IPR015421">
    <property type="entry name" value="PyrdxlP-dep_Trfase_major"/>
</dbReference>
<dbReference type="InterPro" id="IPR015422">
    <property type="entry name" value="PyrdxlP-dep_Trfase_small"/>
</dbReference>
<dbReference type="NCBIfam" id="TIGR00713">
    <property type="entry name" value="hemL"/>
    <property type="match status" value="1"/>
</dbReference>
<dbReference type="NCBIfam" id="NF000818">
    <property type="entry name" value="PRK00062.1"/>
    <property type="match status" value="1"/>
</dbReference>
<dbReference type="PANTHER" id="PTHR43713">
    <property type="entry name" value="GLUTAMATE-1-SEMIALDEHYDE 2,1-AMINOMUTASE"/>
    <property type="match status" value="1"/>
</dbReference>
<dbReference type="PANTHER" id="PTHR43713:SF3">
    <property type="entry name" value="GLUTAMATE-1-SEMIALDEHYDE 2,1-AMINOMUTASE 1, CHLOROPLASTIC-RELATED"/>
    <property type="match status" value="1"/>
</dbReference>
<dbReference type="Pfam" id="PF00202">
    <property type="entry name" value="Aminotran_3"/>
    <property type="match status" value="1"/>
</dbReference>
<dbReference type="SUPFAM" id="SSF53383">
    <property type="entry name" value="PLP-dependent transferases"/>
    <property type="match status" value="1"/>
</dbReference>
<dbReference type="PROSITE" id="PS00600">
    <property type="entry name" value="AA_TRANSFER_CLASS_3"/>
    <property type="match status" value="1"/>
</dbReference>
<gene>
    <name evidence="1" type="primary">hemL</name>
    <name type="ordered locus">A2cp1_4499</name>
</gene>
<evidence type="ECO:0000255" key="1">
    <source>
        <dbReference type="HAMAP-Rule" id="MF_00375"/>
    </source>
</evidence>
<sequence length="430" mass="45475">MKTELSQKLFEKANDLFPGGVNSPVRAFKGVGGTPRFISRAKGSHIFDVDGNDYVDYVLSWGPMIVGHCHPEVMREVQDAMKEGSSFGAPSPREILLAELVRERMPWVEKMRFVSSGTEATTSAIRVARGFTGRDDIVKFDGCYHGAGDPLLVKAGSGVETLGLPDSPGVPADVARHTLTAPYNDLPALEKVFEAKGASIAAVILEPVVGNMGVLVPRPGFLQGVHDLCRKHGALYIVDEVMTGFRLSSGGACGLYGLRPDLVTFGKVIGAGLPVGAFGGRRDVMDRVAPAGPIYQAGTLSGNPMAMAAGHAALKLMTEAAYRKLEALSAALAEGLQAAAAEANVPVQVNRVGSMLTVFFSDRPVFDAASARACNTRRFGAFFHAMLEHGAYLPPSQFEAAFLSTAHTDDDVARTVAAARLAFAEAAKVA</sequence>
<feature type="chain" id="PRO_1000201012" description="Glutamate-1-semialdehyde 2,1-aminomutase">
    <location>
        <begin position="1"/>
        <end position="430"/>
    </location>
</feature>
<feature type="modified residue" description="N6-(pyridoxal phosphate)lysine" evidence="1">
    <location>
        <position position="267"/>
    </location>
</feature>
<organism>
    <name type="scientific">Anaeromyxobacter dehalogenans (strain 2CP-1 / ATCC BAA-258)</name>
    <dbReference type="NCBI Taxonomy" id="455488"/>
    <lineage>
        <taxon>Bacteria</taxon>
        <taxon>Pseudomonadati</taxon>
        <taxon>Myxococcota</taxon>
        <taxon>Myxococcia</taxon>
        <taxon>Myxococcales</taxon>
        <taxon>Cystobacterineae</taxon>
        <taxon>Anaeromyxobacteraceae</taxon>
        <taxon>Anaeromyxobacter</taxon>
    </lineage>
</organism>
<protein>
    <recommendedName>
        <fullName evidence="1">Glutamate-1-semialdehyde 2,1-aminomutase</fullName>
        <shortName evidence="1">GSA</shortName>
        <ecNumber evidence="1">5.4.3.8</ecNumber>
    </recommendedName>
    <alternativeName>
        <fullName evidence="1">Glutamate-1-semialdehyde aminotransferase</fullName>
        <shortName evidence="1">GSA-AT</shortName>
    </alternativeName>
</protein>
<comment type="catalytic activity">
    <reaction evidence="1">
        <text>(S)-4-amino-5-oxopentanoate = 5-aminolevulinate</text>
        <dbReference type="Rhea" id="RHEA:14265"/>
        <dbReference type="ChEBI" id="CHEBI:57501"/>
        <dbReference type="ChEBI" id="CHEBI:356416"/>
        <dbReference type="EC" id="5.4.3.8"/>
    </reaction>
</comment>
<comment type="cofactor">
    <cofactor evidence="1">
        <name>pyridoxal 5'-phosphate</name>
        <dbReference type="ChEBI" id="CHEBI:597326"/>
    </cofactor>
</comment>
<comment type="pathway">
    <text evidence="1">Porphyrin-containing compound metabolism; protoporphyrin-IX biosynthesis; 5-aminolevulinate from L-glutamyl-tRNA(Glu): step 2/2.</text>
</comment>
<comment type="subunit">
    <text evidence="1">Homodimer.</text>
</comment>
<comment type="subcellular location">
    <subcellularLocation>
        <location evidence="1">Cytoplasm</location>
    </subcellularLocation>
</comment>
<comment type="similarity">
    <text evidence="1">Belongs to the class-III pyridoxal-phosphate-dependent aminotransferase family. HemL subfamily.</text>
</comment>